<reference key="1">
    <citation type="journal article" date="2007" name="Nat. Biotechnol.">
        <title>Genome sequencing and analysis of the versatile cell factory Aspergillus niger CBS 513.88.</title>
        <authorList>
            <person name="Pel H.J."/>
            <person name="de Winde J.H."/>
            <person name="Archer D.B."/>
            <person name="Dyer P.S."/>
            <person name="Hofmann G."/>
            <person name="Schaap P.J."/>
            <person name="Turner G."/>
            <person name="de Vries R.P."/>
            <person name="Albang R."/>
            <person name="Albermann K."/>
            <person name="Andersen M.R."/>
            <person name="Bendtsen J.D."/>
            <person name="Benen J.A.E."/>
            <person name="van den Berg M."/>
            <person name="Breestraat S."/>
            <person name="Caddick M.X."/>
            <person name="Contreras R."/>
            <person name="Cornell M."/>
            <person name="Coutinho P.M."/>
            <person name="Danchin E.G.J."/>
            <person name="Debets A.J.M."/>
            <person name="Dekker P."/>
            <person name="van Dijck P.W.M."/>
            <person name="van Dijk A."/>
            <person name="Dijkhuizen L."/>
            <person name="Driessen A.J.M."/>
            <person name="d'Enfert C."/>
            <person name="Geysens S."/>
            <person name="Goosen C."/>
            <person name="Groot G.S.P."/>
            <person name="de Groot P.W.J."/>
            <person name="Guillemette T."/>
            <person name="Henrissat B."/>
            <person name="Herweijer M."/>
            <person name="van den Hombergh J.P.T.W."/>
            <person name="van den Hondel C.A.M.J.J."/>
            <person name="van der Heijden R.T.J.M."/>
            <person name="van der Kaaij R.M."/>
            <person name="Klis F.M."/>
            <person name="Kools H.J."/>
            <person name="Kubicek C.P."/>
            <person name="van Kuyk P.A."/>
            <person name="Lauber J."/>
            <person name="Lu X."/>
            <person name="van der Maarel M.J.E.C."/>
            <person name="Meulenberg R."/>
            <person name="Menke H."/>
            <person name="Mortimer M.A."/>
            <person name="Nielsen J."/>
            <person name="Oliver S.G."/>
            <person name="Olsthoorn M."/>
            <person name="Pal K."/>
            <person name="van Peij N.N.M.E."/>
            <person name="Ram A.F.J."/>
            <person name="Rinas U."/>
            <person name="Roubos J.A."/>
            <person name="Sagt C.M.J."/>
            <person name="Schmoll M."/>
            <person name="Sun J."/>
            <person name="Ussery D."/>
            <person name="Varga J."/>
            <person name="Vervecken W."/>
            <person name="van de Vondervoort P.J.J."/>
            <person name="Wedler H."/>
            <person name="Woesten H.A.B."/>
            <person name="Zeng A.-P."/>
            <person name="van Ooyen A.J.J."/>
            <person name="Visser J."/>
            <person name="Stam H."/>
        </authorList>
    </citation>
    <scope>NUCLEOTIDE SEQUENCE [LARGE SCALE GENOMIC DNA]</scope>
    <source>
        <strain>ATCC MYA-4892 / CBS 513.88 / FGSC A1513</strain>
    </source>
</reference>
<comment type="function">
    <text evidence="1">Probable lipid hydrolase.</text>
</comment>
<comment type="subcellular location">
    <subcellularLocation>
        <location evidence="5">Membrane</location>
        <topology evidence="5">Single-pass membrane protein</topology>
    </subcellularLocation>
</comment>
<comment type="similarity">
    <text evidence="5">Belongs to the PLPL family.</text>
</comment>
<organism>
    <name type="scientific">Aspergillus niger (strain ATCC MYA-4892 / CBS 513.88 / FGSC A1513)</name>
    <dbReference type="NCBI Taxonomy" id="425011"/>
    <lineage>
        <taxon>Eukaryota</taxon>
        <taxon>Fungi</taxon>
        <taxon>Dikarya</taxon>
        <taxon>Ascomycota</taxon>
        <taxon>Pezizomycotina</taxon>
        <taxon>Eurotiomycetes</taxon>
        <taxon>Eurotiomycetidae</taxon>
        <taxon>Eurotiales</taxon>
        <taxon>Aspergillaceae</taxon>
        <taxon>Aspergillus</taxon>
        <taxon>Aspergillus subgen. Circumdati</taxon>
    </lineage>
</organism>
<evidence type="ECO:0000250" key="1"/>
<evidence type="ECO:0000255" key="2"/>
<evidence type="ECO:0000255" key="3">
    <source>
        <dbReference type="PROSITE-ProRule" id="PRU01161"/>
    </source>
</evidence>
<evidence type="ECO:0000256" key="4">
    <source>
        <dbReference type="SAM" id="MobiDB-lite"/>
    </source>
</evidence>
<evidence type="ECO:0000305" key="5"/>
<feature type="chain" id="PRO_0000295551" description="Patatin-like phospholipase domain-containing protein An01g04180">
    <location>
        <begin position="1"/>
        <end position="749"/>
    </location>
</feature>
<feature type="transmembrane region" description="Helical" evidence="2">
    <location>
        <begin position="87"/>
        <end position="107"/>
    </location>
</feature>
<feature type="domain" description="PNPLA" evidence="3">
    <location>
        <begin position="277"/>
        <end position="468"/>
    </location>
</feature>
<feature type="region of interest" description="Disordered" evidence="4">
    <location>
        <begin position="1"/>
        <end position="21"/>
    </location>
</feature>
<feature type="region of interest" description="Disordered" evidence="4">
    <location>
        <begin position="619"/>
        <end position="726"/>
    </location>
</feature>
<feature type="short sequence motif" description="GXSXG" evidence="3">
    <location>
        <begin position="308"/>
        <end position="312"/>
    </location>
</feature>
<feature type="compositionally biased region" description="Basic and acidic residues" evidence="4">
    <location>
        <begin position="649"/>
        <end position="664"/>
    </location>
</feature>
<feature type="compositionally biased region" description="Low complexity" evidence="4">
    <location>
        <begin position="685"/>
        <end position="707"/>
    </location>
</feature>
<feature type="active site" description="Nucleophile" evidence="3">
    <location>
        <position position="310"/>
    </location>
</feature>
<feature type="active site" description="Proton acceptor" evidence="3">
    <location>
        <position position="455"/>
    </location>
</feature>
<name>PLPL_ASPNC</name>
<accession>A2Q8F7</accession>
<proteinExistence type="inferred from homology"/>
<dbReference type="EC" id="3.1.1.-"/>
<dbReference type="EMBL" id="AM269961">
    <property type="protein sequence ID" value="CAK36954.1"/>
    <property type="molecule type" value="Genomic_DNA"/>
</dbReference>
<dbReference type="RefSeq" id="XP_001388846.1">
    <property type="nucleotide sequence ID" value="XM_001388809.2"/>
</dbReference>
<dbReference type="EnsemblFungi" id="CAK36954">
    <property type="protein sequence ID" value="CAK36954"/>
    <property type="gene ID" value="An01g04180"/>
</dbReference>
<dbReference type="GeneID" id="4978123"/>
<dbReference type="KEGG" id="ang:An01g04180"/>
<dbReference type="VEuPathDB" id="FungiDB:An01g04180"/>
<dbReference type="HOGENOM" id="CLU_009031_2_2_1"/>
<dbReference type="Proteomes" id="UP000006706">
    <property type="component" value="Chromosome 2R"/>
</dbReference>
<dbReference type="GO" id="GO:0005811">
    <property type="term" value="C:lipid droplet"/>
    <property type="evidence" value="ECO:0007669"/>
    <property type="project" value="EnsemblFungi"/>
</dbReference>
<dbReference type="GO" id="GO:0016020">
    <property type="term" value="C:membrane"/>
    <property type="evidence" value="ECO:0007669"/>
    <property type="project" value="UniProtKB-SubCell"/>
</dbReference>
<dbReference type="GO" id="GO:0004806">
    <property type="term" value="F:triacylglycerol lipase activity"/>
    <property type="evidence" value="ECO:0007669"/>
    <property type="project" value="EnsemblFungi"/>
</dbReference>
<dbReference type="GO" id="GO:1990748">
    <property type="term" value="P:cellular detoxification"/>
    <property type="evidence" value="ECO:0007669"/>
    <property type="project" value="EnsemblFungi"/>
</dbReference>
<dbReference type="GO" id="GO:0016042">
    <property type="term" value="P:lipid catabolic process"/>
    <property type="evidence" value="ECO:0007669"/>
    <property type="project" value="UniProtKB-KW"/>
</dbReference>
<dbReference type="GO" id="GO:0006642">
    <property type="term" value="P:triglyceride mobilization"/>
    <property type="evidence" value="ECO:0007669"/>
    <property type="project" value="EnsemblFungi"/>
</dbReference>
<dbReference type="CDD" id="cd07232">
    <property type="entry name" value="Pat_PLPL"/>
    <property type="match status" value="1"/>
</dbReference>
<dbReference type="Gene3D" id="3.40.1090.10">
    <property type="entry name" value="Cytosolic phospholipase A2 catalytic domain"/>
    <property type="match status" value="2"/>
</dbReference>
<dbReference type="InterPro" id="IPR016035">
    <property type="entry name" value="Acyl_Trfase/lysoPLipase"/>
</dbReference>
<dbReference type="InterPro" id="IPR050301">
    <property type="entry name" value="NTE"/>
</dbReference>
<dbReference type="InterPro" id="IPR002641">
    <property type="entry name" value="PNPLA_dom"/>
</dbReference>
<dbReference type="InterPro" id="IPR021771">
    <property type="entry name" value="Triacylglycerol_lipase_N"/>
</dbReference>
<dbReference type="PANTHER" id="PTHR14226">
    <property type="entry name" value="NEUROPATHY TARGET ESTERASE/SWISS CHEESE D.MELANOGASTER"/>
    <property type="match status" value="1"/>
</dbReference>
<dbReference type="PANTHER" id="PTHR14226:SF66">
    <property type="entry name" value="TRIACYLGLYCEROL LIPASE PTL2"/>
    <property type="match status" value="1"/>
</dbReference>
<dbReference type="Pfam" id="PF11815">
    <property type="entry name" value="DUF3336"/>
    <property type="match status" value="1"/>
</dbReference>
<dbReference type="Pfam" id="PF01734">
    <property type="entry name" value="Patatin"/>
    <property type="match status" value="1"/>
</dbReference>
<dbReference type="SUPFAM" id="SSF52151">
    <property type="entry name" value="FabD/lysophospholipase-like"/>
    <property type="match status" value="1"/>
</dbReference>
<dbReference type="PROSITE" id="PS51635">
    <property type="entry name" value="PNPLA"/>
    <property type="match status" value="1"/>
</dbReference>
<gene>
    <name type="ORF">An01g04180</name>
</gene>
<sequence>MNGAEKSAAGDTYDPSTIPDYDREFIHPDDLRQFELALTDQGASPLVALNDWRPIYQRVRRERGRRKEPRRTKDETREGVLYTVLKWPFLFTVFGWITALAFAYTLTRVYIFLYEQWVTWRGRRQSLRRQLHAQTNYPDWQKAARALDDHLGNQRWKEIDEYAYYDHLTISNLVKQLKKVRREVERERREKRRGSGQSPAAEELCTLLEACVKNNFAGVENPRLYSEAYSGTKNLVQEYIDELHACIQLVADSKGITSEEKLQHFKHLDTNFGRTALCLSGGATFAYYHFGVVRALLDNGVLPEIITGTSGGALVAALVATRTDEELKQLLVPALAHRIRACQESFPTWVWRWWRTGARFDTLDWARQCSWFCRGSTTFREAYERTGRILNVSCVPSDPHSPTILANYLTSPNCVIWSAVLASAAVPGILNPVVLMTKKRDGTLAPYSFGHKWKDGSLRTDIPIKALNLHFNVNFTIVSQVNPHINLFFFSSRGTVGRPVTHRKGRGWRGGFLGSAIEQYIKLDMNKWLRVLRHLELLPRPMGQDWSEIWLQKFSGTVTIWPKTIPSDFYHILSDPNPERLARMLRVGQQSAFPKLQFIKNRLKIEIAVVKSLQKFAHAGGRPISPAPSRWRQNNDPDNHYNPSPRTDPLNERLDHNLPERRGDNVNITFGEGGGREDTHLLDGSLSENSSNESAARPSSSSSSSRLLRVPEHRRGSTGSSIFEEVRRQSAVFFDDVDMYGDDEALRPG</sequence>
<protein>
    <recommendedName>
        <fullName>Patatin-like phospholipase domain-containing protein An01g04180</fullName>
        <ecNumber>3.1.1.-</ecNumber>
    </recommendedName>
</protein>
<keyword id="KW-0378">Hydrolase</keyword>
<keyword id="KW-0442">Lipid degradation</keyword>
<keyword id="KW-0443">Lipid metabolism</keyword>
<keyword id="KW-0472">Membrane</keyword>
<keyword id="KW-1185">Reference proteome</keyword>
<keyword id="KW-0812">Transmembrane</keyword>
<keyword id="KW-1133">Transmembrane helix</keyword>